<name>KUN3_TABYA</name>
<feature type="signal peptide" evidence="4">
    <location>
        <begin position="1"/>
        <end position="20"/>
    </location>
</feature>
<feature type="chain" id="PRO_5002994254" description="Tabkunin 2" evidence="4">
    <location>
        <begin position="21"/>
        <end position="76"/>
    </location>
</feature>
<feature type="domain" description="BPTI/Kunitz inhibitor" evidence="1">
    <location>
        <begin position="25"/>
        <end position="75"/>
    </location>
</feature>
<feature type="disulfide bond" evidence="1">
    <location>
        <begin position="25"/>
        <end position="75"/>
    </location>
</feature>
<feature type="disulfide bond" evidence="1">
    <location>
        <begin position="34"/>
        <end position="58"/>
    </location>
</feature>
<feature type="disulfide bond" evidence="1">
    <location>
        <begin position="50"/>
        <end position="71"/>
    </location>
</feature>
<protein>
    <recommendedName>
        <fullName evidence="3">Tabkunin 2</fullName>
    </recommendedName>
    <alternativeName>
        <fullName evidence="5">Serine protease inhibitor 3</fullName>
    </alternativeName>
</protein>
<organism>
    <name type="scientific">Tabanus yao</name>
    <name type="common">Horsefly</name>
    <dbReference type="NCBI Taxonomy" id="485572"/>
    <lineage>
        <taxon>Eukaryota</taxon>
        <taxon>Metazoa</taxon>
        <taxon>Ecdysozoa</taxon>
        <taxon>Arthropoda</taxon>
        <taxon>Hexapoda</taxon>
        <taxon>Insecta</taxon>
        <taxon>Pterygota</taxon>
        <taxon>Neoptera</taxon>
        <taxon>Endopterygota</taxon>
        <taxon>Diptera</taxon>
        <taxon>Brachycera</taxon>
        <taxon>Tabanomorpha</taxon>
        <taxon>Tabanoidea</taxon>
        <taxon>Tabanidae</taxon>
        <taxon>Tabanus</taxon>
    </lineage>
</organism>
<reference evidence="5" key="1">
    <citation type="journal article" date="2009" name="Mol. Cell. Proteomics">
        <title>Anti-thrombosis repertoire of blood-feeding horsefly salivary glands.</title>
        <authorList>
            <person name="Ma D."/>
            <person name="Wang Y."/>
            <person name="Yang H."/>
            <person name="Wu J."/>
            <person name="An S."/>
            <person name="Gao L."/>
            <person name="Xu X."/>
            <person name="Lai R."/>
        </authorList>
    </citation>
    <scope>NUCLEOTIDE SEQUENCE [MRNA]</scope>
    <scope>PROTEIN SEQUENCE OF 21-51</scope>
    <scope>SUBCELLULAR LOCATION</scope>
    <scope>MASS SPECTROMETRY</scope>
    <scope>FUNCTION</scope>
    <source>
        <tissue>Salivary gland</tissue>
    </source>
</reference>
<proteinExistence type="evidence at protein level"/>
<accession>C8YJ95</accession>
<sequence length="76" mass="8202">MKVLSLIFVIFSVLVLFASAKDPVCDQPKAVGRCFAAFPKFYFNSSSGQCEAFIYGGCGGNENNFSTLEECNAKCA</sequence>
<evidence type="ECO:0000255" key="1">
    <source>
        <dbReference type="PROSITE-ProRule" id="PRU00031"/>
    </source>
</evidence>
<evidence type="ECO:0000269" key="2">
    <source>
    </source>
</evidence>
<evidence type="ECO:0000303" key="3">
    <source>
    </source>
</evidence>
<evidence type="ECO:0000305" key="4">
    <source>
    </source>
</evidence>
<evidence type="ECO:0000312" key="5">
    <source>
        <dbReference type="EMBL" id="ACS72290.1"/>
    </source>
</evidence>
<keyword id="KW-1203">Blood coagulation cascade inhibiting toxin</keyword>
<keyword id="KW-0903">Direct protein sequencing</keyword>
<keyword id="KW-1015">Disulfide bond</keyword>
<keyword id="KW-1199">Hemostasis impairing toxin</keyword>
<keyword id="KW-0646">Protease inhibitor</keyword>
<keyword id="KW-0964">Secreted</keyword>
<keyword id="KW-0722">Serine protease inhibitor</keyword>
<keyword id="KW-0732">Signal</keyword>
<keyword id="KW-0800">Toxin</keyword>
<dbReference type="EMBL" id="FJ469602">
    <property type="protein sequence ID" value="ACS72290.1"/>
    <property type="molecule type" value="mRNA"/>
</dbReference>
<dbReference type="SMR" id="C8YJ95"/>
<dbReference type="MEROPS" id="I02.026"/>
<dbReference type="GO" id="GO:0005615">
    <property type="term" value="C:extracellular space"/>
    <property type="evidence" value="ECO:0007669"/>
    <property type="project" value="TreeGrafter"/>
</dbReference>
<dbReference type="GO" id="GO:0004867">
    <property type="term" value="F:serine-type endopeptidase inhibitor activity"/>
    <property type="evidence" value="ECO:0007669"/>
    <property type="project" value="UniProtKB-KW"/>
</dbReference>
<dbReference type="GO" id="GO:0090729">
    <property type="term" value="F:toxin activity"/>
    <property type="evidence" value="ECO:0007669"/>
    <property type="project" value="UniProtKB-KW"/>
</dbReference>
<dbReference type="CDD" id="cd00109">
    <property type="entry name" value="Kunitz-type"/>
    <property type="match status" value="1"/>
</dbReference>
<dbReference type="FunFam" id="4.10.410.10:FF:000021">
    <property type="entry name" value="Serine protease inhibitor, putative"/>
    <property type="match status" value="1"/>
</dbReference>
<dbReference type="Gene3D" id="4.10.410.10">
    <property type="entry name" value="Pancreatic trypsin inhibitor Kunitz domain"/>
    <property type="match status" value="1"/>
</dbReference>
<dbReference type="InterPro" id="IPR002223">
    <property type="entry name" value="Kunitz_BPTI"/>
</dbReference>
<dbReference type="InterPro" id="IPR036880">
    <property type="entry name" value="Kunitz_BPTI_sf"/>
</dbReference>
<dbReference type="InterPro" id="IPR020901">
    <property type="entry name" value="Prtase_inh_Kunz-CS"/>
</dbReference>
<dbReference type="InterPro" id="IPR050098">
    <property type="entry name" value="TFPI/VKTCI-like"/>
</dbReference>
<dbReference type="PANTHER" id="PTHR10083:SF374">
    <property type="entry name" value="BPTI_KUNITZ INHIBITOR DOMAIN-CONTAINING PROTEIN"/>
    <property type="match status" value="1"/>
</dbReference>
<dbReference type="PANTHER" id="PTHR10083">
    <property type="entry name" value="KUNITZ-TYPE PROTEASE INHIBITOR-RELATED"/>
    <property type="match status" value="1"/>
</dbReference>
<dbReference type="Pfam" id="PF00014">
    <property type="entry name" value="Kunitz_BPTI"/>
    <property type="match status" value="1"/>
</dbReference>
<dbReference type="PRINTS" id="PR00759">
    <property type="entry name" value="BASICPTASE"/>
</dbReference>
<dbReference type="SMART" id="SM00131">
    <property type="entry name" value="KU"/>
    <property type="match status" value="1"/>
</dbReference>
<dbReference type="SUPFAM" id="SSF57362">
    <property type="entry name" value="BPTI-like"/>
    <property type="match status" value="1"/>
</dbReference>
<dbReference type="PROSITE" id="PS00280">
    <property type="entry name" value="BPTI_KUNITZ_1"/>
    <property type="match status" value="1"/>
</dbReference>
<dbReference type="PROSITE" id="PS50279">
    <property type="entry name" value="BPTI_KUNITZ_2"/>
    <property type="match status" value="1"/>
</dbReference>
<comment type="function">
    <text evidence="2">Potent anticoagulant protein that inhibits the hydrolytic activities of all serine proteases tested (trypsin, thrombin, elastase, and chymotrypsin), with the highest efficacy on thrombin.</text>
</comment>
<comment type="subcellular location">
    <subcellularLocation>
        <location evidence="2">Secreted</location>
    </subcellularLocation>
</comment>
<comment type="tissue specificity">
    <text evidence="4">Expressed in salivary glands.</text>
</comment>
<comment type="mass spectrometry" mass="6015.1" method="MALDI" evidence="2"/>